<keyword id="KW-0067">ATP-binding</keyword>
<keyword id="KW-0997">Cell inner membrane</keyword>
<keyword id="KW-1003">Cell membrane</keyword>
<keyword id="KW-0201">Cytochrome c-type biogenesis</keyword>
<keyword id="KW-0472">Membrane</keyword>
<keyword id="KW-0547">Nucleotide-binding</keyword>
<keyword id="KW-1278">Translocase</keyword>
<keyword id="KW-0813">Transport</keyword>
<sequence length="211" mass="23521">MAIHNLACVRDERQLFSGLNEEFAPGDGVQIEGSNGAGKTLLLRILAGLTPPDAGEIRWRQRPLRQCRSDYYRELVYIGHRAAIKPVLTPRENLTFYQGITGLRNDYAIYRALEQVGLLGYEDVRAAGLSAGQQQRIALARLWLTSASLWILDEPLTAIDHQGAQALVRLFEQHCATGGMVIMTTHQPLPASRYRMRKVALRMAEATSCFG</sequence>
<comment type="function">
    <text evidence="1">Part of the ABC transporter complex CcmAB involved in the biogenesis of c-type cytochromes; once thought to export heme, this seems not to be the case, but its exact role is uncertain. Responsible for energy coupling to the transport system.</text>
</comment>
<comment type="catalytic activity">
    <reaction evidence="1">
        <text>heme b(in) + ATP + H2O = heme b(out) + ADP + phosphate + H(+)</text>
        <dbReference type="Rhea" id="RHEA:19261"/>
        <dbReference type="ChEBI" id="CHEBI:15377"/>
        <dbReference type="ChEBI" id="CHEBI:15378"/>
        <dbReference type="ChEBI" id="CHEBI:30616"/>
        <dbReference type="ChEBI" id="CHEBI:43474"/>
        <dbReference type="ChEBI" id="CHEBI:60344"/>
        <dbReference type="ChEBI" id="CHEBI:456216"/>
        <dbReference type="EC" id="7.6.2.5"/>
    </reaction>
</comment>
<comment type="subunit">
    <text evidence="1">The complex is composed of two ATP-binding proteins (CcmA) and two transmembrane proteins (CcmB).</text>
</comment>
<comment type="subcellular location">
    <subcellularLocation>
        <location evidence="1">Cell inner membrane</location>
        <topology evidence="1">Peripheral membrane protein</topology>
    </subcellularLocation>
</comment>
<comment type="similarity">
    <text evidence="1">Belongs to the ABC transporter superfamily. CcmA exporter (TC 3.A.1.107) family.</text>
</comment>
<name>CCMA_SODGM</name>
<evidence type="ECO:0000255" key="1">
    <source>
        <dbReference type="HAMAP-Rule" id="MF_01707"/>
    </source>
</evidence>
<protein>
    <recommendedName>
        <fullName evidence="1">Cytochrome c biogenesis ATP-binding export protein CcmA</fullName>
        <ecNumber evidence="1">7.6.2.5</ecNumber>
    </recommendedName>
    <alternativeName>
        <fullName evidence="1">Heme exporter protein A</fullName>
    </alternativeName>
</protein>
<proteinExistence type="inferred from homology"/>
<feature type="chain" id="PRO_0000271963" description="Cytochrome c biogenesis ATP-binding export protein CcmA">
    <location>
        <begin position="1"/>
        <end position="211"/>
    </location>
</feature>
<feature type="domain" description="ABC transporter" evidence="1">
    <location>
        <begin position="1"/>
        <end position="211"/>
    </location>
</feature>
<feature type="binding site" evidence="1">
    <location>
        <begin position="33"/>
        <end position="40"/>
    </location>
    <ligand>
        <name>ATP</name>
        <dbReference type="ChEBI" id="CHEBI:30616"/>
    </ligand>
</feature>
<accession>Q2NSG3</accession>
<gene>
    <name evidence="1" type="primary">ccmA</name>
    <name type="ordered locus">SG1637</name>
</gene>
<dbReference type="EC" id="7.6.2.5" evidence="1"/>
<dbReference type="EMBL" id="AP008232">
    <property type="protein sequence ID" value="BAE74912.1"/>
    <property type="molecule type" value="Genomic_DNA"/>
</dbReference>
<dbReference type="RefSeq" id="WP_011411465.1">
    <property type="nucleotide sequence ID" value="NC_007712.1"/>
</dbReference>
<dbReference type="SMR" id="Q2NSG3"/>
<dbReference type="STRING" id="343509.SG1637"/>
<dbReference type="KEGG" id="sgl:SG1637"/>
<dbReference type="eggNOG" id="COG4133">
    <property type="taxonomic scope" value="Bacteria"/>
</dbReference>
<dbReference type="HOGENOM" id="CLU_000604_1_2_6"/>
<dbReference type="OrthoDB" id="9800654at2"/>
<dbReference type="Proteomes" id="UP000001932">
    <property type="component" value="Chromosome"/>
</dbReference>
<dbReference type="GO" id="GO:0005886">
    <property type="term" value="C:plasma membrane"/>
    <property type="evidence" value="ECO:0007669"/>
    <property type="project" value="UniProtKB-SubCell"/>
</dbReference>
<dbReference type="GO" id="GO:0015439">
    <property type="term" value="F:ABC-type heme transporter activity"/>
    <property type="evidence" value="ECO:0007669"/>
    <property type="project" value="UniProtKB-EC"/>
</dbReference>
<dbReference type="GO" id="GO:0005524">
    <property type="term" value="F:ATP binding"/>
    <property type="evidence" value="ECO:0007669"/>
    <property type="project" value="UniProtKB-KW"/>
</dbReference>
<dbReference type="GO" id="GO:0016887">
    <property type="term" value="F:ATP hydrolysis activity"/>
    <property type="evidence" value="ECO:0007669"/>
    <property type="project" value="InterPro"/>
</dbReference>
<dbReference type="GO" id="GO:0017004">
    <property type="term" value="P:cytochrome complex assembly"/>
    <property type="evidence" value="ECO:0007669"/>
    <property type="project" value="UniProtKB-KW"/>
</dbReference>
<dbReference type="Gene3D" id="3.40.50.300">
    <property type="entry name" value="P-loop containing nucleotide triphosphate hydrolases"/>
    <property type="match status" value="1"/>
</dbReference>
<dbReference type="InterPro" id="IPR003593">
    <property type="entry name" value="AAA+_ATPase"/>
</dbReference>
<dbReference type="InterPro" id="IPR003439">
    <property type="entry name" value="ABC_transporter-like_ATP-bd"/>
</dbReference>
<dbReference type="InterPro" id="IPR017871">
    <property type="entry name" value="ABC_transporter-like_CS"/>
</dbReference>
<dbReference type="InterPro" id="IPR005895">
    <property type="entry name" value="ABC_transptr_haem_export_CcmA"/>
</dbReference>
<dbReference type="InterPro" id="IPR027417">
    <property type="entry name" value="P-loop_NTPase"/>
</dbReference>
<dbReference type="NCBIfam" id="TIGR01189">
    <property type="entry name" value="ccmA"/>
    <property type="match status" value="1"/>
</dbReference>
<dbReference type="NCBIfam" id="NF010061">
    <property type="entry name" value="PRK13538.1"/>
    <property type="match status" value="1"/>
</dbReference>
<dbReference type="PANTHER" id="PTHR43499">
    <property type="entry name" value="ABC TRANSPORTER I FAMILY MEMBER 1"/>
    <property type="match status" value="1"/>
</dbReference>
<dbReference type="PANTHER" id="PTHR43499:SF1">
    <property type="entry name" value="ABC TRANSPORTER I FAMILY MEMBER 1"/>
    <property type="match status" value="1"/>
</dbReference>
<dbReference type="Pfam" id="PF00005">
    <property type="entry name" value="ABC_tran"/>
    <property type="match status" value="1"/>
</dbReference>
<dbReference type="SMART" id="SM00382">
    <property type="entry name" value="AAA"/>
    <property type="match status" value="1"/>
</dbReference>
<dbReference type="SUPFAM" id="SSF52540">
    <property type="entry name" value="P-loop containing nucleoside triphosphate hydrolases"/>
    <property type="match status" value="1"/>
</dbReference>
<dbReference type="PROSITE" id="PS00211">
    <property type="entry name" value="ABC_TRANSPORTER_1"/>
    <property type="match status" value="1"/>
</dbReference>
<dbReference type="PROSITE" id="PS50893">
    <property type="entry name" value="ABC_TRANSPORTER_2"/>
    <property type="match status" value="1"/>
</dbReference>
<dbReference type="PROSITE" id="PS51243">
    <property type="entry name" value="CCMA"/>
    <property type="match status" value="1"/>
</dbReference>
<reference key="1">
    <citation type="journal article" date="2006" name="Genome Res.">
        <title>Massive genome erosion and functional adaptations provide insights into the symbiotic lifestyle of Sodalis glossinidius in the tsetse host.</title>
        <authorList>
            <person name="Toh H."/>
            <person name="Weiss B.L."/>
            <person name="Perkin S.A.H."/>
            <person name="Yamashita A."/>
            <person name="Oshima K."/>
            <person name="Hattori M."/>
            <person name="Aksoy S."/>
        </authorList>
    </citation>
    <scope>NUCLEOTIDE SEQUENCE [LARGE SCALE GENOMIC DNA]</scope>
    <source>
        <strain>morsitans</strain>
    </source>
</reference>
<organism>
    <name type="scientific">Sodalis glossinidius (strain morsitans)</name>
    <dbReference type="NCBI Taxonomy" id="343509"/>
    <lineage>
        <taxon>Bacteria</taxon>
        <taxon>Pseudomonadati</taxon>
        <taxon>Pseudomonadota</taxon>
        <taxon>Gammaproteobacteria</taxon>
        <taxon>Enterobacterales</taxon>
        <taxon>Bruguierivoracaceae</taxon>
        <taxon>Sodalis</taxon>
    </lineage>
</organism>